<proteinExistence type="inferred from homology"/>
<reference key="1">
    <citation type="journal article" date="2003" name="Mol. Microbiol.">
        <title>Genome-based analysis of virulence genes in a non-biofilm-forming Staphylococcus epidermidis strain (ATCC 12228).</title>
        <authorList>
            <person name="Zhang Y.-Q."/>
            <person name="Ren S.-X."/>
            <person name="Li H.-L."/>
            <person name="Wang Y.-X."/>
            <person name="Fu G."/>
            <person name="Yang J."/>
            <person name="Qin Z.-Q."/>
            <person name="Miao Y.-G."/>
            <person name="Wang W.-Y."/>
            <person name="Chen R.-S."/>
            <person name="Shen Y."/>
            <person name="Chen Z."/>
            <person name="Yuan Z.-H."/>
            <person name="Zhao G.-P."/>
            <person name="Qu D."/>
            <person name="Danchin A."/>
            <person name="Wen Y.-M."/>
        </authorList>
    </citation>
    <scope>NUCLEOTIDE SEQUENCE [LARGE SCALE GENOMIC DNA]</scope>
    <source>
        <strain>ATCC 12228 / FDA PCI 1200</strain>
    </source>
</reference>
<gene>
    <name type="primary">hssS</name>
    <name type="ordered locus">SE_1942</name>
</gene>
<organism>
    <name type="scientific">Staphylococcus epidermidis (strain ATCC 12228 / FDA PCI 1200)</name>
    <dbReference type="NCBI Taxonomy" id="176280"/>
    <lineage>
        <taxon>Bacteria</taxon>
        <taxon>Bacillati</taxon>
        <taxon>Bacillota</taxon>
        <taxon>Bacilli</taxon>
        <taxon>Bacillales</taxon>
        <taxon>Staphylococcaceae</taxon>
        <taxon>Staphylococcus</taxon>
    </lineage>
</organism>
<protein>
    <recommendedName>
        <fullName>Heme sensor protein HssS</fullName>
        <ecNumber>2.7.13.3</ecNumber>
    </recommendedName>
</protein>
<feature type="chain" id="PRO_0000331351" description="Heme sensor protein HssS">
    <location>
        <begin position="1"/>
        <end position="451"/>
    </location>
</feature>
<feature type="transmembrane region" description="Helical" evidence="2">
    <location>
        <begin position="9"/>
        <end position="29"/>
    </location>
</feature>
<feature type="transmembrane region" description="Helical" evidence="2">
    <location>
        <begin position="164"/>
        <end position="184"/>
    </location>
</feature>
<feature type="domain" description="HAMP" evidence="3">
    <location>
        <begin position="186"/>
        <end position="238"/>
    </location>
</feature>
<feature type="domain" description="Histidine kinase" evidence="4">
    <location>
        <begin position="246"/>
        <end position="451"/>
    </location>
</feature>
<feature type="modified residue" description="Phosphohistidine; by autocatalysis" evidence="4">
    <location>
        <position position="249"/>
    </location>
</feature>
<sequence length="451" mass="52106">MFKTLYSRIAIYAITVILFSALMSFLFTNIYYHFHLKASNDAKIMRTLKEAREYERTQKPKPLDTYLKHLGQMNYQIMTVNEHGTKHFYGETFRKNTISQSAIKKVLNGEDYHGIKNKPYAFFVTGFFDNETDNTVGIQFKTDDGALAVFMRPDIGKTFSEFRIFLAVLITLLLIISISLVIASTYSIIKPVTALKNATTRIMKGDFSTPIKQTRHDEIGTLQSRFNTMRQNLGQVDQMRQHFVQNVSHEIKTPLTHLQRLLTQLELTQNEEEKQLCINEMFEITNQVSELTKELLLLSELDNASHLTFNDNVHLNTLIKDIIRHEQFRTDEKDLVLFTELEDLYFRGNERLLHQAFNNLIINAMKYAPQNSMINITLTSTNHLIIFNIENDGSIAEEDAKHIFDRFYKLSDESSSNGLGLAITQSIIHLHHGSITLTSDDKTQFIVKLFI</sequence>
<keyword id="KW-0067">ATP-binding</keyword>
<keyword id="KW-1003">Cell membrane</keyword>
<keyword id="KW-0418">Kinase</keyword>
<keyword id="KW-0472">Membrane</keyword>
<keyword id="KW-0547">Nucleotide-binding</keyword>
<keyword id="KW-0597">Phosphoprotein</keyword>
<keyword id="KW-0808">Transferase</keyword>
<keyword id="KW-0812">Transmembrane</keyword>
<keyword id="KW-1133">Transmembrane helix</keyword>
<keyword id="KW-0902">Two-component regulatory system</keyword>
<keyword id="KW-0843">Virulence</keyword>
<comment type="function">
    <text evidence="1">Member of the two-component regulatory system HssS/HssR involved in intracellular heme homeostasis and tempering of staphylococcal virulence. HssS functions as a heme sensor histidine kinase which is autophosphorylated at a histidine residue and transfers its phosphate group to an aspartate residue of HssR. HssR/HssS activates the expression of HrtAB, an efflux pump, in response to extracellular heme, hemin, hemoglobin or blood (By similarity).</text>
</comment>
<comment type="catalytic activity">
    <reaction>
        <text>ATP + protein L-histidine = ADP + protein N-phospho-L-histidine.</text>
        <dbReference type="EC" id="2.7.13.3"/>
    </reaction>
</comment>
<comment type="subcellular location">
    <subcellularLocation>
        <location evidence="1">Cell membrane</location>
        <topology evidence="1">Multi-pass membrane protein</topology>
    </subcellularLocation>
</comment>
<comment type="PTM">
    <text evidence="1">Autophosphorylated.</text>
</comment>
<accession>Q8CRA8</accession>
<evidence type="ECO:0000250" key="1"/>
<evidence type="ECO:0000255" key="2"/>
<evidence type="ECO:0000255" key="3">
    <source>
        <dbReference type="PROSITE-ProRule" id="PRU00102"/>
    </source>
</evidence>
<evidence type="ECO:0000255" key="4">
    <source>
        <dbReference type="PROSITE-ProRule" id="PRU00107"/>
    </source>
</evidence>
<name>HSSS_STAES</name>
<dbReference type="EC" id="2.7.13.3"/>
<dbReference type="EMBL" id="AE015929">
    <property type="protein sequence ID" value="AAO05583.1"/>
    <property type="molecule type" value="Genomic_DNA"/>
</dbReference>
<dbReference type="RefSeq" id="NP_765497.1">
    <property type="nucleotide sequence ID" value="NC_004461.1"/>
</dbReference>
<dbReference type="RefSeq" id="WP_002485531.1">
    <property type="nucleotide sequence ID" value="NZ_WBME01000017.1"/>
</dbReference>
<dbReference type="SMR" id="Q8CRA8"/>
<dbReference type="KEGG" id="sep:SE_1942"/>
<dbReference type="PATRIC" id="fig|176280.10.peg.1895"/>
<dbReference type="eggNOG" id="COG3850">
    <property type="taxonomic scope" value="Bacteria"/>
</dbReference>
<dbReference type="eggNOG" id="COG5002">
    <property type="taxonomic scope" value="Bacteria"/>
</dbReference>
<dbReference type="HOGENOM" id="CLU_000445_89_6_9"/>
<dbReference type="OrthoDB" id="9813151at2"/>
<dbReference type="Proteomes" id="UP000001411">
    <property type="component" value="Chromosome"/>
</dbReference>
<dbReference type="GO" id="GO:0005886">
    <property type="term" value="C:plasma membrane"/>
    <property type="evidence" value="ECO:0007669"/>
    <property type="project" value="UniProtKB-SubCell"/>
</dbReference>
<dbReference type="GO" id="GO:0005524">
    <property type="term" value="F:ATP binding"/>
    <property type="evidence" value="ECO:0007669"/>
    <property type="project" value="UniProtKB-KW"/>
</dbReference>
<dbReference type="GO" id="GO:0000155">
    <property type="term" value="F:phosphorelay sensor kinase activity"/>
    <property type="evidence" value="ECO:0007669"/>
    <property type="project" value="InterPro"/>
</dbReference>
<dbReference type="CDD" id="cd06225">
    <property type="entry name" value="HAMP"/>
    <property type="match status" value="1"/>
</dbReference>
<dbReference type="CDD" id="cd00075">
    <property type="entry name" value="HATPase"/>
    <property type="match status" value="1"/>
</dbReference>
<dbReference type="CDD" id="cd00082">
    <property type="entry name" value="HisKA"/>
    <property type="match status" value="1"/>
</dbReference>
<dbReference type="Gene3D" id="1.10.287.130">
    <property type="match status" value="1"/>
</dbReference>
<dbReference type="Gene3D" id="6.10.340.10">
    <property type="match status" value="1"/>
</dbReference>
<dbReference type="Gene3D" id="3.30.565.10">
    <property type="entry name" value="Histidine kinase-like ATPase, C-terminal domain"/>
    <property type="match status" value="1"/>
</dbReference>
<dbReference type="InterPro" id="IPR050398">
    <property type="entry name" value="Bact_Sensor_His_Kinase"/>
</dbReference>
<dbReference type="InterPro" id="IPR003660">
    <property type="entry name" value="HAMP_dom"/>
</dbReference>
<dbReference type="InterPro" id="IPR036890">
    <property type="entry name" value="HATPase_C_sf"/>
</dbReference>
<dbReference type="InterPro" id="IPR005467">
    <property type="entry name" value="His_kinase_dom"/>
</dbReference>
<dbReference type="InterPro" id="IPR003661">
    <property type="entry name" value="HisK_dim/P_dom"/>
</dbReference>
<dbReference type="InterPro" id="IPR036097">
    <property type="entry name" value="HisK_dim/P_sf"/>
</dbReference>
<dbReference type="PANTHER" id="PTHR45528:SF11">
    <property type="entry name" value="HISTIDINE KINASE"/>
    <property type="match status" value="1"/>
</dbReference>
<dbReference type="PANTHER" id="PTHR45528">
    <property type="entry name" value="SENSOR HISTIDINE KINASE CPXA"/>
    <property type="match status" value="1"/>
</dbReference>
<dbReference type="Pfam" id="PF00672">
    <property type="entry name" value="HAMP"/>
    <property type="match status" value="1"/>
</dbReference>
<dbReference type="Pfam" id="PF02518">
    <property type="entry name" value="HATPase_c"/>
    <property type="match status" value="1"/>
</dbReference>
<dbReference type="Pfam" id="PF00512">
    <property type="entry name" value="HisKA"/>
    <property type="match status" value="1"/>
</dbReference>
<dbReference type="SMART" id="SM00304">
    <property type="entry name" value="HAMP"/>
    <property type="match status" value="1"/>
</dbReference>
<dbReference type="SMART" id="SM00387">
    <property type="entry name" value="HATPase_c"/>
    <property type="match status" value="1"/>
</dbReference>
<dbReference type="SMART" id="SM00388">
    <property type="entry name" value="HisKA"/>
    <property type="match status" value="1"/>
</dbReference>
<dbReference type="SUPFAM" id="SSF55874">
    <property type="entry name" value="ATPase domain of HSP90 chaperone/DNA topoisomerase II/histidine kinase"/>
    <property type="match status" value="1"/>
</dbReference>
<dbReference type="SUPFAM" id="SSF158472">
    <property type="entry name" value="HAMP domain-like"/>
    <property type="match status" value="1"/>
</dbReference>
<dbReference type="SUPFAM" id="SSF47384">
    <property type="entry name" value="Homodimeric domain of signal transducing histidine kinase"/>
    <property type="match status" value="1"/>
</dbReference>
<dbReference type="PROSITE" id="PS50885">
    <property type="entry name" value="HAMP"/>
    <property type="match status" value="1"/>
</dbReference>
<dbReference type="PROSITE" id="PS50109">
    <property type="entry name" value="HIS_KIN"/>
    <property type="match status" value="1"/>
</dbReference>